<gene>
    <name type="primary">abfC</name>
    <name type="ORF">AFUA_1G09900</name>
</gene>
<dbReference type="EC" id="3.2.1.55"/>
<dbReference type="EMBL" id="AAHF01000004">
    <property type="protein sequence ID" value="EAL90319.1"/>
    <property type="status" value="ALT_SEQ"/>
    <property type="molecule type" value="Genomic_DNA"/>
</dbReference>
<dbReference type="RefSeq" id="XP_752357.1">
    <property type="nucleotide sequence ID" value="XM_747264.1"/>
</dbReference>
<dbReference type="SMR" id="Q4WTB3"/>
<dbReference type="STRING" id="330879.Q4WTB3"/>
<dbReference type="GlyCosmos" id="Q4WTB3">
    <property type="glycosylation" value="4 sites, No reported glycans"/>
</dbReference>
<dbReference type="GeneID" id="3510568"/>
<dbReference type="KEGG" id="afm:AFUA_1G09900"/>
<dbReference type="VEuPathDB" id="FungiDB:Afu1g09900"/>
<dbReference type="eggNOG" id="ENOG502QRW4">
    <property type="taxonomic scope" value="Eukaryota"/>
</dbReference>
<dbReference type="HOGENOM" id="CLU_017810_1_0_1"/>
<dbReference type="InParanoid" id="Q4WTB3"/>
<dbReference type="OrthoDB" id="3032304at2759"/>
<dbReference type="UniPathway" id="UPA00667"/>
<dbReference type="Proteomes" id="UP000002530">
    <property type="component" value="Chromosome 1"/>
</dbReference>
<dbReference type="GO" id="GO:0005576">
    <property type="term" value="C:extracellular region"/>
    <property type="evidence" value="ECO:0007669"/>
    <property type="project" value="UniProtKB-SubCell"/>
</dbReference>
<dbReference type="GO" id="GO:0046556">
    <property type="term" value="F:alpha-L-arabinofuranosidase activity"/>
    <property type="evidence" value="ECO:0007669"/>
    <property type="project" value="UniProtKB-EC"/>
</dbReference>
<dbReference type="GO" id="GO:0031222">
    <property type="term" value="P:arabinan catabolic process"/>
    <property type="evidence" value="ECO:0007669"/>
    <property type="project" value="UniProtKB-UniPathway"/>
</dbReference>
<dbReference type="GO" id="GO:0046373">
    <property type="term" value="P:L-arabinose metabolic process"/>
    <property type="evidence" value="ECO:0007669"/>
    <property type="project" value="InterPro"/>
</dbReference>
<dbReference type="GO" id="GO:0000272">
    <property type="term" value="P:polysaccharide catabolic process"/>
    <property type="evidence" value="ECO:0000318"/>
    <property type="project" value="GO_Central"/>
</dbReference>
<dbReference type="FunFam" id="3.20.20.80:FF:000110">
    <property type="entry name" value="Alpha-L-arabinofuranosidase C"/>
    <property type="match status" value="1"/>
</dbReference>
<dbReference type="Gene3D" id="3.20.20.80">
    <property type="entry name" value="Glycosidases"/>
    <property type="match status" value="1"/>
</dbReference>
<dbReference type="Gene3D" id="2.60.40.1180">
    <property type="entry name" value="Golgi alpha-mannosidase II"/>
    <property type="match status" value="1"/>
</dbReference>
<dbReference type="InterPro" id="IPR010720">
    <property type="entry name" value="Alpha-L-AF_C"/>
</dbReference>
<dbReference type="InterPro" id="IPR013780">
    <property type="entry name" value="Glyco_hydro_b"/>
</dbReference>
<dbReference type="InterPro" id="IPR017853">
    <property type="entry name" value="Glycoside_hydrolase_SF"/>
</dbReference>
<dbReference type="PANTHER" id="PTHR43576:SF3">
    <property type="entry name" value="ALPHA-L-ARABINOFURANOSIDASE C"/>
    <property type="match status" value="1"/>
</dbReference>
<dbReference type="PANTHER" id="PTHR43576">
    <property type="entry name" value="ALPHA-L-ARABINOFURANOSIDASE C-RELATED"/>
    <property type="match status" value="1"/>
</dbReference>
<dbReference type="Pfam" id="PF06964">
    <property type="entry name" value="Alpha-L-AF_C"/>
    <property type="match status" value="1"/>
</dbReference>
<dbReference type="SMART" id="SM00813">
    <property type="entry name" value="Alpha-L-AF_C"/>
    <property type="match status" value="1"/>
</dbReference>
<dbReference type="SUPFAM" id="SSF51445">
    <property type="entry name" value="(Trans)glycosidases"/>
    <property type="match status" value="1"/>
</dbReference>
<dbReference type="SUPFAM" id="SSF51011">
    <property type="entry name" value="Glycosyl hydrolase domain"/>
    <property type="match status" value="1"/>
</dbReference>
<sequence length="505" mass="56572">MTTFTKLSEQETPSISVHASRRISKINPNIYAGFTEHMGRCIYGGIYDPGNPLSDENGFRKDVLEALKELNIPVIRYPGGNFTATYHWIDGVGPKDQRPARPELAWLGTETNHFGTDEFMKWCELLGTEPYFCLNFGTGTLDEALAWVEYCNGTKDTYYANLRRKNGREEPYNIKYWALGNEVWGPWQVAQMTKEEYAHKAYQWAKALKLLDPSLKLILCGQDGTASWDYYTLKQCLLPAHSPLSTSTVPLIDMHSIHMYTCGSTHLPNVTAPLAAERAIEITSSLIDLAMIENGIPPDQPRPTICFDEWNVWDPLRAEGSKGAEESYTLSDALAVAIWLNVFVRKSKDVGMACIAQSVNVISPLMTTKDGIIKQTIWWPLYLFSKYMRGWTINAHVSCGAYEGETSPKWIRAVKDTPWLDVSATLGEDGYANVAVVNISDEKDMECKFEGATGDVTVFTVTGDSVSACNMKGKEEVGLTESTWDGKGAYKFPRHSLTLLRWKAE</sequence>
<accession>Q4WTB3</accession>
<reference key="1">
    <citation type="journal article" date="2005" name="Nature">
        <title>Genomic sequence of the pathogenic and allergenic filamentous fungus Aspergillus fumigatus.</title>
        <authorList>
            <person name="Nierman W.C."/>
            <person name="Pain A."/>
            <person name="Anderson M.J."/>
            <person name="Wortman J.R."/>
            <person name="Kim H.S."/>
            <person name="Arroyo J."/>
            <person name="Berriman M."/>
            <person name="Abe K."/>
            <person name="Archer D.B."/>
            <person name="Bermejo C."/>
            <person name="Bennett J.W."/>
            <person name="Bowyer P."/>
            <person name="Chen D."/>
            <person name="Collins M."/>
            <person name="Coulsen R."/>
            <person name="Davies R."/>
            <person name="Dyer P.S."/>
            <person name="Farman M.L."/>
            <person name="Fedorova N."/>
            <person name="Fedorova N.D."/>
            <person name="Feldblyum T.V."/>
            <person name="Fischer R."/>
            <person name="Fosker N."/>
            <person name="Fraser A."/>
            <person name="Garcia J.L."/>
            <person name="Garcia M.J."/>
            <person name="Goble A."/>
            <person name="Goldman G.H."/>
            <person name="Gomi K."/>
            <person name="Griffith-Jones S."/>
            <person name="Gwilliam R."/>
            <person name="Haas B.J."/>
            <person name="Haas H."/>
            <person name="Harris D.E."/>
            <person name="Horiuchi H."/>
            <person name="Huang J."/>
            <person name="Humphray S."/>
            <person name="Jimenez J."/>
            <person name="Keller N."/>
            <person name="Khouri H."/>
            <person name="Kitamoto K."/>
            <person name="Kobayashi T."/>
            <person name="Konzack S."/>
            <person name="Kulkarni R."/>
            <person name="Kumagai T."/>
            <person name="Lafton A."/>
            <person name="Latge J.-P."/>
            <person name="Li W."/>
            <person name="Lord A."/>
            <person name="Lu C."/>
            <person name="Majoros W.H."/>
            <person name="May G.S."/>
            <person name="Miller B.L."/>
            <person name="Mohamoud Y."/>
            <person name="Molina M."/>
            <person name="Monod M."/>
            <person name="Mouyna I."/>
            <person name="Mulligan S."/>
            <person name="Murphy L.D."/>
            <person name="O'Neil S."/>
            <person name="Paulsen I."/>
            <person name="Penalva M.A."/>
            <person name="Pertea M."/>
            <person name="Price C."/>
            <person name="Pritchard B.L."/>
            <person name="Quail M.A."/>
            <person name="Rabbinowitsch E."/>
            <person name="Rawlins N."/>
            <person name="Rajandream M.A."/>
            <person name="Reichard U."/>
            <person name="Renauld H."/>
            <person name="Robson G.D."/>
            <person name="Rodriguez de Cordoba S."/>
            <person name="Rodriguez-Pena J.M."/>
            <person name="Ronning C.M."/>
            <person name="Rutter S."/>
            <person name="Salzberg S.L."/>
            <person name="Sanchez M."/>
            <person name="Sanchez-Ferrero J.C."/>
            <person name="Saunders D."/>
            <person name="Seeger K."/>
            <person name="Squares R."/>
            <person name="Squares S."/>
            <person name="Takeuchi M."/>
            <person name="Tekaia F."/>
            <person name="Turner G."/>
            <person name="Vazquez de Aldana C.R."/>
            <person name="Weidman J."/>
            <person name="White O."/>
            <person name="Woodward J.R."/>
            <person name="Yu J.-H."/>
            <person name="Fraser C.M."/>
            <person name="Galagan J.E."/>
            <person name="Asai K."/>
            <person name="Machida M."/>
            <person name="Hall N."/>
            <person name="Barrell B.G."/>
            <person name="Denning D.W."/>
        </authorList>
    </citation>
    <scope>NUCLEOTIDE SEQUENCE [LARGE SCALE GENOMIC DNA]</scope>
    <source>
        <strain>ATCC MYA-4609 / CBS 101355 / FGSC A1100 / Af293</strain>
    </source>
</reference>
<comment type="function">
    <text evidence="1">Alpha-L-arabinofuranosidase involved in the degradation of arabinoxylan, a major component of plant hemicellulose. Acts only on small linear 1,5-alpha-linked L-arabinofuranosyl oligosaccharides (By similarity).</text>
</comment>
<comment type="catalytic activity">
    <reaction>
        <text>Hydrolysis of terminal non-reducing alpha-L-arabinofuranoside residues in alpha-L-arabinosides.</text>
        <dbReference type="EC" id="3.2.1.55"/>
    </reaction>
</comment>
<comment type="pathway">
    <text>Glycan metabolism; L-arabinan degradation.</text>
</comment>
<comment type="subcellular location">
    <subcellularLocation>
        <location evidence="1">Secreted</location>
    </subcellularLocation>
</comment>
<comment type="similarity">
    <text evidence="3">Belongs to the glycosyl hydrolase 51 family.</text>
</comment>
<comment type="sequence caution" evidence="3">
    <conflict type="erroneous gene model prediction">
        <sequence resource="EMBL-CDS" id="EAL90319"/>
    </conflict>
</comment>
<evidence type="ECO:0000250" key="1"/>
<evidence type="ECO:0000255" key="2"/>
<evidence type="ECO:0000305" key="3"/>
<protein>
    <recommendedName>
        <fullName>Probable alpha-L-arabinofuranosidase C</fullName>
        <shortName>ABF C</shortName>
        <shortName>Arabinosidase C</shortName>
        <ecNumber>3.2.1.55</ecNumber>
    </recommendedName>
</protein>
<keyword id="KW-0119">Carbohydrate metabolism</keyword>
<keyword id="KW-0325">Glycoprotein</keyword>
<keyword id="KW-0326">Glycosidase</keyword>
<keyword id="KW-0378">Hydrolase</keyword>
<keyword id="KW-0624">Polysaccharide degradation</keyword>
<keyword id="KW-1185">Reference proteome</keyword>
<keyword id="KW-0964">Secreted</keyword>
<keyword id="KW-0732">Signal</keyword>
<feature type="signal peptide" evidence="2">
    <location>
        <begin position="1"/>
        <end status="unknown"/>
    </location>
</feature>
<feature type="chain" id="PRO_0000394613" description="Probable alpha-L-arabinofuranosidase C">
    <location>
        <begin status="unknown"/>
        <end position="505"/>
    </location>
</feature>
<feature type="glycosylation site" description="N-linked (GlcNAc...) asparagine" evidence="2">
    <location>
        <position position="81"/>
    </location>
</feature>
<feature type="glycosylation site" description="N-linked (GlcNAc...) asparagine" evidence="2">
    <location>
        <position position="152"/>
    </location>
</feature>
<feature type="glycosylation site" description="N-linked (GlcNAc...) asparagine" evidence="2">
    <location>
        <position position="269"/>
    </location>
</feature>
<feature type="glycosylation site" description="N-linked (GlcNAc...) asparagine" evidence="2">
    <location>
        <position position="438"/>
    </location>
</feature>
<proteinExistence type="inferred from homology"/>
<organism>
    <name type="scientific">Aspergillus fumigatus (strain ATCC MYA-4609 / CBS 101355 / FGSC A1100 / Af293)</name>
    <name type="common">Neosartorya fumigata</name>
    <dbReference type="NCBI Taxonomy" id="330879"/>
    <lineage>
        <taxon>Eukaryota</taxon>
        <taxon>Fungi</taxon>
        <taxon>Dikarya</taxon>
        <taxon>Ascomycota</taxon>
        <taxon>Pezizomycotina</taxon>
        <taxon>Eurotiomycetes</taxon>
        <taxon>Eurotiomycetidae</taxon>
        <taxon>Eurotiales</taxon>
        <taxon>Aspergillaceae</taxon>
        <taxon>Aspergillus</taxon>
        <taxon>Aspergillus subgen. Fumigati</taxon>
    </lineage>
</organism>
<name>ABFC_ASPFU</name>